<name>DTX56_ARATH</name>
<dbReference type="EMBL" id="AL021635">
    <property type="protein sequence ID" value="CAA16564.1"/>
    <property type="molecule type" value="Genomic_DNA"/>
</dbReference>
<dbReference type="EMBL" id="AL161558">
    <property type="protein sequence ID" value="CAB79234.1"/>
    <property type="molecule type" value="Genomic_DNA"/>
</dbReference>
<dbReference type="EMBL" id="CP002687">
    <property type="protein sequence ID" value="AEE84658.1"/>
    <property type="molecule type" value="Genomic_DNA"/>
</dbReference>
<dbReference type="EMBL" id="BT002796">
    <property type="protein sequence ID" value="AAO22621.1"/>
    <property type="molecule type" value="mRNA"/>
</dbReference>
<dbReference type="PIR" id="T04574">
    <property type="entry name" value="T04574"/>
</dbReference>
<dbReference type="RefSeq" id="NP_194010.1">
    <property type="nucleotide sequence ID" value="NM_118408.2"/>
</dbReference>
<dbReference type="SMR" id="O49660"/>
<dbReference type="IntAct" id="O49660">
    <property type="interactions" value="3"/>
</dbReference>
<dbReference type="STRING" id="3702.O49660"/>
<dbReference type="PaxDb" id="3702-AT4G22790.1"/>
<dbReference type="ProteomicsDB" id="220725"/>
<dbReference type="EnsemblPlants" id="AT4G22790.1">
    <property type="protein sequence ID" value="AT4G22790.1"/>
    <property type="gene ID" value="AT4G22790"/>
</dbReference>
<dbReference type="GeneID" id="828378"/>
<dbReference type="Gramene" id="AT4G22790.1">
    <property type="protein sequence ID" value="AT4G22790.1"/>
    <property type="gene ID" value="AT4G22790"/>
</dbReference>
<dbReference type="KEGG" id="ath:AT4G22790"/>
<dbReference type="Araport" id="AT4G22790"/>
<dbReference type="TAIR" id="AT4G22790">
    <property type="gene designation" value="RHC1"/>
</dbReference>
<dbReference type="eggNOG" id="KOG1347">
    <property type="taxonomic scope" value="Eukaryota"/>
</dbReference>
<dbReference type="HOGENOM" id="CLU_012893_1_0_1"/>
<dbReference type="InParanoid" id="O49660"/>
<dbReference type="OMA" id="CGAMEPV"/>
<dbReference type="OrthoDB" id="2126698at2759"/>
<dbReference type="PhylomeDB" id="O49660"/>
<dbReference type="PRO" id="PR:O49660"/>
<dbReference type="Proteomes" id="UP000006548">
    <property type="component" value="Chromosome 4"/>
</dbReference>
<dbReference type="ExpressionAtlas" id="O49660">
    <property type="expression patterns" value="baseline and differential"/>
</dbReference>
<dbReference type="GO" id="GO:0005886">
    <property type="term" value="C:plasma membrane"/>
    <property type="evidence" value="ECO:0000314"/>
    <property type="project" value="TAIR"/>
</dbReference>
<dbReference type="GO" id="GO:0015297">
    <property type="term" value="F:antiporter activity"/>
    <property type="evidence" value="ECO:0007669"/>
    <property type="project" value="InterPro"/>
</dbReference>
<dbReference type="GO" id="GO:0042910">
    <property type="term" value="F:xenobiotic transmembrane transporter activity"/>
    <property type="evidence" value="ECO:0007669"/>
    <property type="project" value="InterPro"/>
</dbReference>
<dbReference type="GO" id="GO:0071244">
    <property type="term" value="P:cellular response to carbon dioxide"/>
    <property type="evidence" value="ECO:0000315"/>
    <property type="project" value="TAIR"/>
</dbReference>
<dbReference type="GO" id="GO:1902456">
    <property type="term" value="P:regulation of stomatal opening"/>
    <property type="evidence" value="ECO:0000315"/>
    <property type="project" value="TAIR"/>
</dbReference>
<dbReference type="GO" id="GO:1990961">
    <property type="term" value="P:xenobiotic detoxification by transmembrane export across the plasma membrane"/>
    <property type="evidence" value="ECO:0007669"/>
    <property type="project" value="InterPro"/>
</dbReference>
<dbReference type="CDD" id="cd13132">
    <property type="entry name" value="MATE_eukaryotic"/>
    <property type="match status" value="1"/>
</dbReference>
<dbReference type="InterPro" id="IPR045069">
    <property type="entry name" value="MATE_euk"/>
</dbReference>
<dbReference type="InterPro" id="IPR002528">
    <property type="entry name" value="MATE_fam"/>
</dbReference>
<dbReference type="NCBIfam" id="TIGR00797">
    <property type="entry name" value="matE"/>
    <property type="match status" value="1"/>
</dbReference>
<dbReference type="PANTHER" id="PTHR11206">
    <property type="entry name" value="MULTIDRUG RESISTANCE PROTEIN"/>
    <property type="match status" value="1"/>
</dbReference>
<dbReference type="Pfam" id="PF01554">
    <property type="entry name" value="MatE"/>
    <property type="match status" value="2"/>
</dbReference>
<comment type="function">
    <text evidence="2">Could function as a HCO(3)(-) -sensing component in the CO(2) signaling pathway in guard cells. Acts as an upstream repressor of HT1. Plays a role in stomatal response to CO(2).</text>
</comment>
<comment type="subunit">
    <text evidence="2">Interacts with BCA4 and HT1.</text>
</comment>
<comment type="interaction">
    <interactant intactId="EBI-11174814">
        <id>O49660</id>
    </interactant>
    <interactant intactId="EBI-4430840">
        <id>Q94CE4</id>
        <label>BCA4</label>
    </interactant>
    <organismsDiffer>false</organismsDiffer>
    <experiments>2</experiments>
</comment>
<comment type="subcellular location">
    <subcellularLocation>
        <location evidence="2">Cell membrane</location>
        <topology evidence="2">Multi-pass membrane protein</topology>
    </subcellularLocation>
</comment>
<comment type="tissue specificity">
    <text evidence="2">Preferentially expressed in guard cells.</text>
</comment>
<comment type="disruption phenotype">
    <text evidence="2">Defective in stomatal responses to Co(2). Showed more rapid leaf expansion under high CO(2) condition as compared with the wild type.</text>
</comment>
<comment type="similarity">
    <text evidence="5">Belongs to the multi antimicrobial extrusion (MATE) (TC 2.A.66.1) family.</text>
</comment>
<feature type="chain" id="PRO_0000434090" description="Protein DETOXIFICATION 56">
    <location>
        <begin position="1"/>
        <end position="491"/>
    </location>
</feature>
<feature type="transmembrane region" description="Helical" evidence="1">
    <location>
        <begin position="39"/>
        <end position="59"/>
    </location>
</feature>
<feature type="transmembrane region" description="Helical" evidence="1">
    <location>
        <begin position="72"/>
        <end position="92"/>
    </location>
</feature>
<feature type="transmembrane region" description="Helical" evidence="1">
    <location>
        <begin position="111"/>
        <end position="131"/>
    </location>
</feature>
<feature type="transmembrane region" description="Helical" evidence="1">
    <location>
        <begin position="154"/>
        <end position="174"/>
    </location>
</feature>
<feature type="transmembrane region" description="Helical" evidence="1">
    <location>
        <begin position="181"/>
        <end position="201"/>
    </location>
</feature>
<feature type="transmembrane region" description="Helical" evidence="1">
    <location>
        <begin position="212"/>
        <end position="232"/>
    </location>
</feature>
<feature type="transmembrane region" description="Helical" evidence="1">
    <location>
        <begin position="261"/>
        <end position="281"/>
    </location>
</feature>
<feature type="transmembrane region" description="Helical" evidence="1">
    <location>
        <begin position="291"/>
        <end position="311"/>
    </location>
</feature>
<feature type="transmembrane region" description="Helical" evidence="1">
    <location>
        <begin position="336"/>
        <end position="356"/>
    </location>
</feature>
<feature type="transmembrane region" description="Helical" evidence="1">
    <location>
        <begin position="379"/>
        <end position="399"/>
    </location>
</feature>
<feature type="transmembrane region" description="Helical" evidence="1">
    <location>
        <begin position="409"/>
        <end position="429"/>
    </location>
</feature>
<feature type="transmembrane region" description="Helical" evidence="1">
    <location>
        <begin position="438"/>
        <end position="458"/>
    </location>
</feature>
<proteinExistence type="evidence at protein level"/>
<organism>
    <name type="scientific">Arabidopsis thaliana</name>
    <name type="common">Mouse-ear cress</name>
    <dbReference type="NCBI Taxonomy" id="3702"/>
    <lineage>
        <taxon>Eukaryota</taxon>
        <taxon>Viridiplantae</taxon>
        <taxon>Streptophyta</taxon>
        <taxon>Embryophyta</taxon>
        <taxon>Tracheophyta</taxon>
        <taxon>Spermatophyta</taxon>
        <taxon>Magnoliopsida</taxon>
        <taxon>eudicotyledons</taxon>
        <taxon>Gunneridae</taxon>
        <taxon>Pentapetalae</taxon>
        <taxon>rosids</taxon>
        <taxon>malvids</taxon>
        <taxon>Brassicales</taxon>
        <taxon>Brassicaceae</taxon>
        <taxon>Camelineae</taxon>
        <taxon>Arabidopsis</taxon>
    </lineage>
</organism>
<sequence>MSETSKSESLDPEVSEGLCSKTLMQSIVHELKLQMRIGLPLVVMNLLWFGKMTTTSVFLGRQGELNLAGGSLGFSFANVTGFSVLYGISAAMEPICGQAFGAKNFKLLHKTLFMAVLLLLLISVPISFLWLNVHKILTGFGQREDISFIAKKYLLYLLPELPILSFLCPLKAYLSSQGVTLPIMFTTAAATSLHIPINIVLSKARGIEGVAMAVWITDFIVVILLTGYVIVVERMKENKWKQGGWLNQSAQDWLTLIKLSGPCCLTVCLEWWCYEILVLLTGRLPNPVQAVSILIIVFNFDYLLYAVMLSLGTCVATRVSNELGANNPKGAYRAAYTTLIVGIISGCIGALVMIAFRGFWGSLYTHHDQLILNGVKKMMLIMAVIEVVNFPLMVCGEIVRGTAKPSLGMYANLSGFYLLALPLGATLAFKAKQGLQGFLIGLFVGISLCLSILLIFIARIDWEKEAGKAQILTCNTEDEQTSQGSGQDSHS</sequence>
<accession>O49660</accession>
<reference key="1">
    <citation type="journal article" date="1999" name="Nature">
        <title>Sequence and analysis of chromosome 4 of the plant Arabidopsis thaliana.</title>
        <authorList>
            <person name="Mayer K.F.X."/>
            <person name="Schueller C."/>
            <person name="Wambutt R."/>
            <person name="Murphy G."/>
            <person name="Volckaert G."/>
            <person name="Pohl T."/>
            <person name="Duesterhoeft A."/>
            <person name="Stiekema W."/>
            <person name="Entian K.-D."/>
            <person name="Terryn N."/>
            <person name="Harris B."/>
            <person name="Ansorge W."/>
            <person name="Brandt P."/>
            <person name="Grivell L.A."/>
            <person name="Rieger M."/>
            <person name="Weichselgartner M."/>
            <person name="de Simone V."/>
            <person name="Obermaier B."/>
            <person name="Mache R."/>
            <person name="Mueller M."/>
            <person name="Kreis M."/>
            <person name="Delseny M."/>
            <person name="Puigdomenech P."/>
            <person name="Watson M."/>
            <person name="Schmidtheini T."/>
            <person name="Reichert B."/>
            <person name="Portetelle D."/>
            <person name="Perez-Alonso M."/>
            <person name="Boutry M."/>
            <person name="Bancroft I."/>
            <person name="Vos P."/>
            <person name="Hoheisel J."/>
            <person name="Zimmermann W."/>
            <person name="Wedler H."/>
            <person name="Ridley P."/>
            <person name="Langham S.-A."/>
            <person name="McCullagh B."/>
            <person name="Bilham L."/>
            <person name="Robben J."/>
            <person name="van der Schueren J."/>
            <person name="Grymonprez B."/>
            <person name="Chuang Y.-J."/>
            <person name="Vandenbussche F."/>
            <person name="Braeken M."/>
            <person name="Weltjens I."/>
            <person name="Voet M."/>
            <person name="Bastiaens I."/>
            <person name="Aert R."/>
            <person name="Defoor E."/>
            <person name="Weitzenegger T."/>
            <person name="Bothe G."/>
            <person name="Ramsperger U."/>
            <person name="Hilbert H."/>
            <person name="Braun M."/>
            <person name="Holzer E."/>
            <person name="Brandt A."/>
            <person name="Peters S."/>
            <person name="van Staveren M."/>
            <person name="Dirkse W."/>
            <person name="Mooijman P."/>
            <person name="Klein Lankhorst R."/>
            <person name="Rose M."/>
            <person name="Hauf J."/>
            <person name="Koetter P."/>
            <person name="Berneiser S."/>
            <person name="Hempel S."/>
            <person name="Feldpausch M."/>
            <person name="Lamberth S."/>
            <person name="Van den Daele H."/>
            <person name="De Keyser A."/>
            <person name="Buysshaert C."/>
            <person name="Gielen J."/>
            <person name="Villarroel R."/>
            <person name="De Clercq R."/>
            <person name="van Montagu M."/>
            <person name="Rogers J."/>
            <person name="Cronin A."/>
            <person name="Quail M.A."/>
            <person name="Bray-Allen S."/>
            <person name="Clark L."/>
            <person name="Doggett J."/>
            <person name="Hall S."/>
            <person name="Kay M."/>
            <person name="Lennard N."/>
            <person name="McLay K."/>
            <person name="Mayes R."/>
            <person name="Pettett A."/>
            <person name="Rajandream M.A."/>
            <person name="Lyne M."/>
            <person name="Benes V."/>
            <person name="Rechmann S."/>
            <person name="Borkova D."/>
            <person name="Bloecker H."/>
            <person name="Scharfe M."/>
            <person name="Grimm M."/>
            <person name="Loehnert T.-H."/>
            <person name="Dose S."/>
            <person name="de Haan M."/>
            <person name="Maarse A.C."/>
            <person name="Schaefer M."/>
            <person name="Mueller-Auer S."/>
            <person name="Gabel C."/>
            <person name="Fuchs M."/>
            <person name="Fartmann B."/>
            <person name="Granderath K."/>
            <person name="Dauner D."/>
            <person name="Herzl A."/>
            <person name="Neumann S."/>
            <person name="Argiriou A."/>
            <person name="Vitale D."/>
            <person name="Liguori R."/>
            <person name="Piravandi E."/>
            <person name="Massenet O."/>
            <person name="Quigley F."/>
            <person name="Clabauld G."/>
            <person name="Muendlein A."/>
            <person name="Felber R."/>
            <person name="Schnabl S."/>
            <person name="Hiller R."/>
            <person name="Schmidt W."/>
            <person name="Lecharny A."/>
            <person name="Aubourg S."/>
            <person name="Chefdor F."/>
            <person name="Cooke R."/>
            <person name="Berger C."/>
            <person name="Monfort A."/>
            <person name="Casacuberta E."/>
            <person name="Gibbons T."/>
            <person name="Weber N."/>
            <person name="Vandenbol M."/>
            <person name="Bargues M."/>
            <person name="Terol J."/>
            <person name="Torres A."/>
            <person name="Perez-Perez A."/>
            <person name="Purnelle B."/>
            <person name="Bent E."/>
            <person name="Johnson S."/>
            <person name="Tacon D."/>
            <person name="Jesse T."/>
            <person name="Heijnen L."/>
            <person name="Schwarz S."/>
            <person name="Scholler P."/>
            <person name="Heber S."/>
            <person name="Francs P."/>
            <person name="Bielke C."/>
            <person name="Frishman D."/>
            <person name="Haase D."/>
            <person name="Lemcke K."/>
            <person name="Mewes H.-W."/>
            <person name="Stocker S."/>
            <person name="Zaccaria P."/>
            <person name="Bevan M."/>
            <person name="Wilson R.K."/>
            <person name="de la Bastide M."/>
            <person name="Habermann K."/>
            <person name="Parnell L."/>
            <person name="Dedhia N."/>
            <person name="Gnoj L."/>
            <person name="Schutz K."/>
            <person name="Huang E."/>
            <person name="Spiegel L."/>
            <person name="Sekhon M."/>
            <person name="Murray J."/>
            <person name="Sheet P."/>
            <person name="Cordes M."/>
            <person name="Abu-Threideh J."/>
            <person name="Stoneking T."/>
            <person name="Kalicki J."/>
            <person name="Graves T."/>
            <person name="Harmon G."/>
            <person name="Edwards J."/>
            <person name="Latreille P."/>
            <person name="Courtney L."/>
            <person name="Cloud J."/>
            <person name="Abbott A."/>
            <person name="Scott K."/>
            <person name="Johnson D."/>
            <person name="Minx P."/>
            <person name="Bentley D."/>
            <person name="Fulton B."/>
            <person name="Miller N."/>
            <person name="Greco T."/>
            <person name="Kemp K."/>
            <person name="Kramer J."/>
            <person name="Fulton L."/>
            <person name="Mardis E."/>
            <person name="Dante M."/>
            <person name="Pepin K."/>
            <person name="Hillier L.W."/>
            <person name="Nelson J."/>
            <person name="Spieth J."/>
            <person name="Ryan E."/>
            <person name="Andrews S."/>
            <person name="Geisel C."/>
            <person name="Layman D."/>
            <person name="Du H."/>
            <person name="Ali J."/>
            <person name="Berghoff A."/>
            <person name="Jones K."/>
            <person name="Drone K."/>
            <person name="Cotton M."/>
            <person name="Joshu C."/>
            <person name="Antonoiu B."/>
            <person name="Zidanic M."/>
            <person name="Strong C."/>
            <person name="Sun H."/>
            <person name="Lamar B."/>
            <person name="Yordan C."/>
            <person name="Ma P."/>
            <person name="Zhong J."/>
            <person name="Preston R."/>
            <person name="Vil D."/>
            <person name="Shekher M."/>
            <person name="Matero A."/>
            <person name="Shah R."/>
            <person name="Swaby I.K."/>
            <person name="O'Shaughnessy A."/>
            <person name="Rodriguez M."/>
            <person name="Hoffman J."/>
            <person name="Till S."/>
            <person name="Granat S."/>
            <person name="Shohdy N."/>
            <person name="Hasegawa A."/>
            <person name="Hameed A."/>
            <person name="Lodhi M."/>
            <person name="Johnson A."/>
            <person name="Chen E."/>
            <person name="Marra M.A."/>
            <person name="Martienssen R."/>
            <person name="McCombie W.R."/>
        </authorList>
    </citation>
    <scope>NUCLEOTIDE SEQUENCE [LARGE SCALE GENOMIC DNA]</scope>
    <source>
        <strain>cv. Columbia</strain>
    </source>
</reference>
<reference key="2">
    <citation type="journal article" date="2017" name="Plant J.">
        <title>Araport11: a complete reannotation of the Arabidopsis thaliana reference genome.</title>
        <authorList>
            <person name="Cheng C.Y."/>
            <person name="Krishnakumar V."/>
            <person name="Chan A.P."/>
            <person name="Thibaud-Nissen F."/>
            <person name="Schobel S."/>
            <person name="Town C.D."/>
        </authorList>
    </citation>
    <scope>GENOME REANNOTATION</scope>
    <source>
        <strain>cv. Columbia</strain>
    </source>
</reference>
<reference key="3">
    <citation type="journal article" date="2003" name="Science">
        <title>Empirical analysis of transcriptional activity in the Arabidopsis genome.</title>
        <authorList>
            <person name="Yamada K."/>
            <person name="Lim J."/>
            <person name="Dale J.M."/>
            <person name="Chen H."/>
            <person name="Shinn P."/>
            <person name="Palm C.J."/>
            <person name="Southwick A.M."/>
            <person name="Wu H.C."/>
            <person name="Kim C.J."/>
            <person name="Nguyen M."/>
            <person name="Pham P.K."/>
            <person name="Cheuk R.F."/>
            <person name="Karlin-Newmann G."/>
            <person name="Liu S.X."/>
            <person name="Lam B."/>
            <person name="Sakano H."/>
            <person name="Wu T."/>
            <person name="Yu G."/>
            <person name="Miranda M."/>
            <person name="Quach H.L."/>
            <person name="Tripp M."/>
            <person name="Chang C.H."/>
            <person name="Lee J.M."/>
            <person name="Toriumi M.J."/>
            <person name="Chan M.M."/>
            <person name="Tang C.C."/>
            <person name="Onodera C.S."/>
            <person name="Deng J.M."/>
            <person name="Akiyama K."/>
            <person name="Ansari Y."/>
            <person name="Arakawa T."/>
            <person name="Banh J."/>
            <person name="Banno F."/>
            <person name="Bowser L."/>
            <person name="Brooks S.Y."/>
            <person name="Carninci P."/>
            <person name="Chao Q."/>
            <person name="Choy N."/>
            <person name="Enju A."/>
            <person name="Goldsmith A.D."/>
            <person name="Gurjal M."/>
            <person name="Hansen N.F."/>
            <person name="Hayashizaki Y."/>
            <person name="Johnson-Hopson C."/>
            <person name="Hsuan V.W."/>
            <person name="Iida K."/>
            <person name="Karnes M."/>
            <person name="Khan S."/>
            <person name="Koesema E."/>
            <person name="Ishida J."/>
            <person name="Jiang P.X."/>
            <person name="Jones T."/>
            <person name="Kawai J."/>
            <person name="Kamiya A."/>
            <person name="Meyers C."/>
            <person name="Nakajima M."/>
            <person name="Narusaka M."/>
            <person name="Seki M."/>
            <person name="Sakurai T."/>
            <person name="Satou M."/>
            <person name="Tamse R."/>
            <person name="Vaysberg M."/>
            <person name="Wallender E.K."/>
            <person name="Wong C."/>
            <person name="Yamamura Y."/>
            <person name="Yuan S."/>
            <person name="Shinozaki K."/>
            <person name="Davis R.W."/>
            <person name="Theologis A."/>
            <person name="Ecker J.R."/>
        </authorList>
    </citation>
    <scope>NUCLEOTIDE SEQUENCE [LARGE SCALE MRNA]</scope>
    <source>
        <strain>cv. Columbia</strain>
    </source>
</reference>
<reference key="4">
    <citation type="journal article" date="2002" name="J. Biol. Chem.">
        <title>Functional cloning and characterization of a plant efflux carrier for multidrug and heavy metal detoxification.</title>
        <authorList>
            <person name="Li L."/>
            <person name="He Z."/>
            <person name="Pandey G.K."/>
            <person name="Tsuchiya T."/>
            <person name="Luan S."/>
        </authorList>
    </citation>
    <scope>GENE FAMILY</scope>
    <scope>NOMENCLATURE</scope>
</reference>
<reference key="5">
    <citation type="journal article" date="2003" name="Eur. J. Biochem.">
        <title>The multidrug/oligosaccharidyl-lipid/polysaccharide (MOP) exporter superfamily.</title>
        <authorList>
            <person name="Hvorup R.N."/>
            <person name="Winnen B."/>
            <person name="Chang A.B."/>
            <person name="Jiang Y."/>
            <person name="Zhou X.F."/>
            <person name="Saier M.H. Jr."/>
        </authorList>
    </citation>
    <scope>GENE FAMILY</scope>
</reference>
<reference key="6">
    <citation type="journal article" date="2015" name="Nat. Commun.">
        <title>A molecular pathway for CO(2) response in Arabidopsis guard cells.</title>
        <authorList>
            <person name="Tian W."/>
            <person name="Hou C."/>
            <person name="Ren Z."/>
            <person name="Pan Y."/>
            <person name="Jia J."/>
            <person name="Zhang H."/>
            <person name="Bai F."/>
            <person name="Zhang P."/>
            <person name="Zhu H."/>
            <person name="He Y."/>
            <person name="Luo S."/>
            <person name="Li L."/>
            <person name="Luan S."/>
        </authorList>
    </citation>
    <scope>FUNCTION</scope>
    <scope>DISRUPTION PHENOTYPE</scope>
    <scope>TISSUE SPECIFICITY</scope>
    <scope>SUBCELLULAR LOCATION</scope>
    <scope>INTERACTION WITH BCA4 AND HT1</scope>
</reference>
<gene>
    <name evidence="3" type="primary">DTX56</name>
    <name evidence="4" type="synonym">RHC1</name>
    <name evidence="6" type="ordered locus">At4g22790</name>
    <name evidence="7" type="ORF">T12H17.180</name>
</gene>
<protein>
    <recommendedName>
        <fullName evidence="3">Protein DETOXIFICATION 56</fullName>
        <shortName evidence="3">AtDTX56</shortName>
    </recommendedName>
    <alternativeName>
        <fullName evidence="5">Multidrug and toxic compound extrusion protein 56</fullName>
        <shortName evidence="5">MATE protein 56</shortName>
    </alternativeName>
    <alternativeName>
        <fullName evidence="4">Protein RESISTANT TO HIGH CARBON DIOXIDE 1</fullName>
    </alternativeName>
</protein>
<keyword id="KW-1003">Cell membrane</keyword>
<keyword id="KW-0472">Membrane</keyword>
<keyword id="KW-1185">Reference proteome</keyword>
<keyword id="KW-0812">Transmembrane</keyword>
<keyword id="KW-1133">Transmembrane helix</keyword>
<keyword id="KW-0813">Transport</keyword>
<evidence type="ECO:0000255" key="1"/>
<evidence type="ECO:0000269" key="2">
    <source>
    </source>
</evidence>
<evidence type="ECO:0000303" key="3">
    <source>
    </source>
</evidence>
<evidence type="ECO:0000303" key="4">
    <source>
    </source>
</evidence>
<evidence type="ECO:0000305" key="5"/>
<evidence type="ECO:0000312" key="6">
    <source>
        <dbReference type="Araport" id="AT4G22790"/>
    </source>
</evidence>
<evidence type="ECO:0000312" key="7">
    <source>
        <dbReference type="EMBL" id="CAA16564.1"/>
    </source>
</evidence>